<keyword id="KW-0067">ATP-binding</keyword>
<keyword id="KW-0418">Kinase</keyword>
<keyword id="KW-0545">Nucleotide biosynthesis</keyword>
<keyword id="KW-0547">Nucleotide-binding</keyword>
<keyword id="KW-0808">Transferase</keyword>
<gene>
    <name evidence="1" type="primary">tmk</name>
    <name type="ordered locus">MmarC6_1625</name>
</gene>
<feature type="chain" id="PRO_1000097411" description="Probable thymidylate kinase">
    <location>
        <begin position="1"/>
        <end position="199"/>
    </location>
</feature>
<feature type="binding site" evidence="1">
    <location>
        <begin position="9"/>
        <end position="16"/>
    </location>
    <ligand>
        <name>ATP</name>
        <dbReference type="ChEBI" id="CHEBI:30616"/>
    </ligand>
</feature>
<dbReference type="EC" id="2.7.4.9" evidence="1"/>
<dbReference type="EMBL" id="CP000867">
    <property type="protein sequence ID" value="ABX02437.1"/>
    <property type="molecule type" value="Genomic_DNA"/>
</dbReference>
<dbReference type="SMR" id="A9AAR4"/>
<dbReference type="STRING" id="444158.MmarC6_1625"/>
<dbReference type="KEGG" id="mmx:MmarC6_1625"/>
<dbReference type="eggNOG" id="arCOG01891">
    <property type="taxonomic scope" value="Archaea"/>
</dbReference>
<dbReference type="HOGENOM" id="CLU_049131_0_2_2"/>
<dbReference type="OrthoDB" id="43083at2157"/>
<dbReference type="PhylomeDB" id="A9AAR4"/>
<dbReference type="GO" id="GO:0005737">
    <property type="term" value="C:cytoplasm"/>
    <property type="evidence" value="ECO:0007669"/>
    <property type="project" value="TreeGrafter"/>
</dbReference>
<dbReference type="GO" id="GO:0005524">
    <property type="term" value="F:ATP binding"/>
    <property type="evidence" value="ECO:0007669"/>
    <property type="project" value="UniProtKB-UniRule"/>
</dbReference>
<dbReference type="GO" id="GO:0004798">
    <property type="term" value="F:dTMP kinase activity"/>
    <property type="evidence" value="ECO:0007669"/>
    <property type="project" value="UniProtKB-UniRule"/>
</dbReference>
<dbReference type="GO" id="GO:0006233">
    <property type="term" value="P:dTDP biosynthetic process"/>
    <property type="evidence" value="ECO:0007669"/>
    <property type="project" value="InterPro"/>
</dbReference>
<dbReference type="GO" id="GO:0006235">
    <property type="term" value="P:dTTP biosynthetic process"/>
    <property type="evidence" value="ECO:0007669"/>
    <property type="project" value="UniProtKB-UniRule"/>
</dbReference>
<dbReference type="GO" id="GO:0006227">
    <property type="term" value="P:dUDP biosynthetic process"/>
    <property type="evidence" value="ECO:0007669"/>
    <property type="project" value="TreeGrafter"/>
</dbReference>
<dbReference type="CDD" id="cd01672">
    <property type="entry name" value="TMPK"/>
    <property type="match status" value="1"/>
</dbReference>
<dbReference type="Gene3D" id="3.40.50.300">
    <property type="entry name" value="P-loop containing nucleotide triphosphate hydrolases"/>
    <property type="match status" value="1"/>
</dbReference>
<dbReference type="HAMAP" id="MF_00165">
    <property type="entry name" value="Thymidylate_kinase"/>
    <property type="match status" value="1"/>
</dbReference>
<dbReference type="InterPro" id="IPR027417">
    <property type="entry name" value="P-loop_NTPase"/>
</dbReference>
<dbReference type="InterPro" id="IPR039430">
    <property type="entry name" value="Thymidylate_kin-like_dom"/>
</dbReference>
<dbReference type="InterPro" id="IPR018095">
    <property type="entry name" value="Thymidylate_kin_CS"/>
</dbReference>
<dbReference type="InterPro" id="IPR018094">
    <property type="entry name" value="Thymidylate_kinase"/>
</dbReference>
<dbReference type="NCBIfam" id="TIGR00041">
    <property type="entry name" value="DTMP_kinase"/>
    <property type="match status" value="1"/>
</dbReference>
<dbReference type="PANTHER" id="PTHR10344">
    <property type="entry name" value="THYMIDYLATE KINASE"/>
    <property type="match status" value="1"/>
</dbReference>
<dbReference type="PANTHER" id="PTHR10344:SF4">
    <property type="entry name" value="UMP-CMP KINASE 2, MITOCHONDRIAL"/>
    <property type="match status" value="1"/>
</dbReference>
<dbReference type="Pfam" id="PF02223">
    <property type="entry name" value="Thymidylate_kin"/>
    <property type="match status" value="1"/>
</dbReference>
<dbReference type="SUPFAM" id="SSF52540">
    <property type="entry name" value="P-loop containing nucleoside triphosphate hydrolases"/>
    <property type="match status" value="1"/>
</dbReference>
<dbReference type="PROSITE" id="PS01331">
    <property type="entry name" value="THYMIDYLATE_KINASE"/>
    <property type="match status" value="1"/>
</dbReference>
<sequence>MNKFIVFEGIDGCGKTTQAKLIAERLNAKFTFEPTDGKIGKSIREILSGSKCQKETLALLFAADRVEHVSKIEEDLKKSHIVSDRYVYSSIVYQMSQGIPKDFIYTINDYAKTPDLVVLLDVDLNEALKRMESREKEIFEKIEIQKKIKEGYYSLINSENEKFMPTYGFIIIDTTSKSINQVFDEILNAIIDKIPDIIQ</sequence>
<reference key="1">
    <citation type="submission" date="2007-10" db="EMBL/GenBank/DDBJ databases">
        <title>Complete sequence of Methanococcus maripaludis C6.</title>
        <authorList>
            <consortium name="US DOE Joint Genome Institute"/>
            <person name="Copeland A."/>
            <person name="Lucas S."/>
            <person name="Lapidus A."/>
            <person name="Barry K."/>
            <person name="Glavina del Rio T."/>
            <person name="Dalin E."/>
            <person name="Tice H."/>
            <person name="Pitluck S."/>
            <person name="Clum A."/>
            <person name="Schmutz J."/>
            <person name="Larimer F."/>
            <person name="Land M."/>
            <person name="Hauser L."/>
            <person name="Kyrpides N."/>
            <person name="Mikhailova N."/>
            <person name="Sieprawska-Lupa M."/>
            <person name="Whitman W.B."/>
            <person name="Richardson P."/>
        </authorList>
    </citation>
    <scope>NUCLEOTIDE SEQUENCE [LARGE SCALE GENOMIC DNA]</scope>
    <source>
        <strain>C6 / ATCC BAA-1332</strain>
    </source>
</reference>
<comment type="catalytic activity">
    <reaction evidence="1">
        <text>dTMP + ATP = dTDP + ADP</text>
        <dbReference type="Rhea" id="RHEA:13517"/>
        <dbReference type="ChEBI" id="CHEBI:30616"/>
        <dbReference type="ChEBI" id="CHEBI:58369"/>
        <dbReference type="ChEBI" id="CHEBI:63528"/>
        <dbReference type="ChEBI" id="CHEBI:456216"/>
        <dbReference type="EC" id="2.7.4.9"/>
    </reaction>
</comment>
<comment type="similarity">
    <text evidence="1">Belongs to the thymidylate kinase family.</text>
</comment>
<protein>
    <recommendedName>
        <fullName evidence="1">Probable thymidylate kinase</fullName>
        <ecNumber evidence="1">2.7.4.9</ecNumber>
    </recommendedName>
    <alternativeName>
        <fullName evidence="1">dTMP kinase</fullName>
    </alternativeName>
</protein>
<accession>A9AAR4</accession>
<organism>
    <name type="scientific">Methanococcus maripaludis (strain C6 / ATCC BAA-1332)</name>
    <dbReference type="NCBI Taxonomy" id="444158"/>
    <lineage>
        <taxon>Archaea</taxon>
        <taxon>Methanobacteriati</taxon>
        <taxon>Methanobacteriota</taxon>
        <taxon>Methanomada group</taxon>
        <taxon>Methanococci</taxon>
        <taxon>Methanococcales</taxon>
        <taxon>Methanococcaceae</taxon>
        <taxon>Methanococcus</taxon>
    </lineage>
</organism>
<evidence type="ECO:0000255" key="1">
    <source>
        <dbReference type="HAMAP-Rule" id="MF_00165"/>
    </source>
</evidence>
<proteinExistence type="inferred from homology"/>
<name>KTHY_METM6</name>